<gene>
    <name evidence="1" type="primary">hslU</name>
    <name type="synonym">htpI</name>
    <name type="ordered locus">BP3087</name>
</gene>
<sequence length="444" mass="49702">MSANHMTPGEIVSELDKFIIGQNRAKRAVAVALRNRWRRQQVAEPLRHEIHPKNILMIGPTGVGKTEIARRLAKLANAPFIKIEATKFTEVGYVGRDVDTIIRDLTEYSIKQTRELEMRRVRSHAEDAAEDRILDALVPPPRGASGEPERGEDNSARQTFRKRLREGKIDDLEIEIEIAQPMPQMDVMTPPGMEEMAEQLRGMFAGLARDKKKSKKIKVREAFKLIVEEEAAKRVNEDDLRAAAITNVEQNGIVFLDEIDKIAARQETGGADVSRQGVQRDLLPLVEGTTVNTRYGMVRTDHILFIASGAFHLARPSDLIPELQGRFPIRVELDSLSAEDFVSILSETDASLIKQYTALLGTEDVKLEFTDDGIRRLAELAFSVNERTENIGARRLYTVMEKLLEELSFDASANSGEVITIDAAYVDLQLAETAGSQDLARYVL</sequence>
<organism>
    <name type="scientific">Bordetella pertussis (strain Tohama I / ATCC BAA-589 / NCTC 13251)</name>
    <dbReference type="NCBI Taxonomy" id="257313"/>
    <lineage>
        <taxon>Bacteria</taxon>
        <taxon>Pseudomonadati</taxon>
        <taxon>Pseudomonadota</taxon>
        <taxon>Betaproteobacteria</taxon>
        <taxon>Burkholderiales</taxon>
        <taxon>Alcaligenaceae</taxon>
        <taxon>Bordetella</taxon>
    </lineage>
</organism>
<reference key="1">
    <citation type="journal article" date="2003" name="Nat. Genet.">
        <title>Comparative analysis of the genome sequences of Bordetella pertussis, Bordetella parapertussis and Bordetella bronchiseptica.</title>
        <authorList>
            <person name="Parkhill J."/>
            <person name="Sebaihia M."/>
            <person name="Preston A."/>
            <person name="Murphy L.D."/>
            <person name="Thomson N.R."/>
            <person name="Harris D.E."/>
            <person name="Holden M.T.G."/>
            <person name="Churcher C.M."/>
            <person name="Bentley S.D."/>
            <person name="Mungall K.L."/>
            <person name="Cerdeno-Tarraga A.-M."/>
            <person name="Temple L."/>
            <person name="James K.D."/>
            <person name="Harris B."/>
            <person name="Quail M.A."/>
            <person name="Achtman M."/>
            <person name="Atkin R."/>
            <person name="Baker S."/>
            <person name="Basham D."/>
            <person name="Bason N."/>
            <person name="Cherevach I."/>
            <person name="Chillingworth T."/>
            <person name="Collins M."/>
            <person name="Cronin A."/>
            <person name="Davis P."/>
            <person name="Doggett J."/>
            <person name="Feltwell T."/>
            <person name="Goble A."/>
            <person name="Hamlin N."/>
            <person name="Hauser H."/>
            <person name="Holroyd S."/>
            <person name="Jagels K."/>
            <person name="Leather S."/>
            <person name="Moule S."/>
            <person name="Norberczak H."/>
            <person name="O'Neil S."/>
            <person name="Ormond D."/>
            <person name="Price C."/>
            <person name="Rabbinowitsch E."/>
            <person name="Rutter S."/>
            <person name="Sanders M."/>
            <person name="Saunders D."/>
            <person name="Seeger K."/>
            <person name="Sharp S."/>
            <person name="Simmonds M."/>
            <person name="Skelton J."/>
            <person name="Squares R."/>
            <person name="Squares S."/>
            <person name="Stevens K."/>
            <person name="Unwin L."/>
            <person name="Whitehead S."/>
            <person name="Barrell B.G."/>
            <person name="Maskell D.J."/>
        </authorList>
    </citation>
    <scope>NUCLEOTIDE SEQUENCE [LARGE SCALE GENOMIC DNA]</scope>
    <source>
        <strain>Tohama I / ATCC BAA-589 / NCTC 13251</strain>
    </source>
</reference>
<proteinExistence type="inferred from homology"/>
<keyword id="KW-0067">ATP-binding</keyword>
<keyword id="KW-0143">Chaperone</keyword>
<keyword id="KW-0963">Cytoplasm</keyword>
<keyword id="KW-0547">Nucleotide-binding</keyword>
<keyword id="KW-1185">Reference proteome</keyword>
<accession>Q7VUJ9</accession>
<protein>
    <recommendedName>
        <fullName evidence="1">ATP-dependent protease ATPase subunit HslU</fullName>
    </recommendedName>
    <alternativeName>
        <fullName evidence="1">Unfoldase HslU</fullName>
    </alternativeName>
</protein>
<evidence type="ECO:0000255" key="1">
    <source>
        <dbReference type="HAMAP-Rule" id="MF_00249"/>
    </source>
</evidence>
<evidence type="ECO:0000256" key="2">
    <source>
        <dbReference type="SAM" id="MobiDB-lite"/>
    </source>
</evidence>
<dbReference type="EMBL" id="BX640420">
    <property type="protein sequence ID" value="CAE43356.1"/>
    <property type="molecule type" value="Genomic_DNA"/>
</dbReference>
<dbReference type="RefSeq" id="NP_881658.1">
    <property type="nucleotide sequence ID" value="NC_002929.2"/>
</dbReference>
<dbReference type="RefSeq" id="WP_003807162.1">
    <property type="nucleotide sequence ID" value="NZ_CP039022.1"/>
</dbReference>
<dbReference type="SMR" id="Q7VUJ9"/>
<dbReference type="STRING" id="257313.BP3087"/>
<dbReference type="PaxDb" id="257313-BP3087"/>
<dbReference type="GeneID" id="69602987"/>
<dbReference type="KEGG" id="bpe:BP3087"/>
<dbReference type="PATRIC" id="fig|257313.5.peg.3336"/>
<dbReference type="eggNOG" id="COG1220">
    <property type="taxonomic scope" value="Bacteria"/>
</dbReference>
<dbReference type="HOGENOM" id="CLU_033123_0_0_4"/>
<dbReference type="Proteomes" id="UP000002676">
    <property type="component" value="Chromosome"/>
</dbReference>
<dbReference type="GO" id="GO:0009376">
    <property type="term" value="C:HslUV protease complex"/>
    <property type="evidence" value="ECO:0007669"/>
    <property type="project" value="UniProtKB-UniRule"/>
</dbReference>
<dbReference type="GO" id="GO:0005524">
    <property type="term" value="F:ATP binding"/>
    <property type="evidence" value="ECO:0007669"/>
    <property type="project" value="UniProtKB-UniRule"/>
</dbReference>
<dbReference type="GO" id="GO:0016887">
    <property type="term" value="F:ATP hydrolysis activity"/>
    <property type="evidence" value="ECO:0007669"/>
    <property type="project" value="InterPro"/>
</dbReference>
<dbReference type="GO" id="GO:0008233">
    <property type="term" value="F:peptidase activity"/>
    <property type="evidence" value="ECO:0007669"/>
    <property type="project" value="InterPro"/>
</dbReference>
<dbReference type="GO" id="GO:0036402">
    <property type="term" value="F:proteasome-activating activity"/>
    <property type="evidence" value="ECO:0007669"/>
    <property type="project" value="UniProtKB-UniRule"/>
</dbReference>
<dbReference type="GO" id="GO:0043335">
    <property type="term" value="P:protein unfolding"/>
    <property type="evidence" value="ECO:0007669"/>
    <property type="project" value="UniProtKB-UniRule"/>
</dbReference>
<dbReference type="GO" id="GO:0051603">
    <property type="term" value="P:proteolysis involved in protein catabolic process"/>
    <property type="evidence" value="ECO:0007669"/>
    <property type="project" value="TreeGrafter"/>
</dbReference>
<dbReference type="CDD" id="cd19498">
    <property type="entry name" value="RecA-like_HslU"/>
    <property type="match status" value="1"/>
</dbReference>
<dbReference type="FunFam" id="3.40.50.300:FF:000213">
    <property type="entry name" value="ATP-dependent protease ATPase subunit HslU"/>
    <property type="match status" value="1"/>
</dbReference>
<dbReference type="FunFam" id="3.40.50.300:FF:000220">
    <property type="entry name" value="ATP-dependent protease ATPase subunit HslU"/>
    <property type="match status" value="1"/>
</dbReference>
<dbReference type="Gene3D" id="1.10.8.60">
    <property type="match status" value="1"/>
</dbReference>
<dbReference type="Gene3D" id="1.10.8.10">
    <property type="entry name" value="DNA helicase RuvA subunit, C-terminal domain"/>
    <property type="match status" value="1"/>
</dbReference>
<dbReference type="Gene3D" id="3.40.50.300">
    <property type="entry name" value="P-loop containing nucleotide triphosphate hydrolases"/>
    <property type="match status" value="2"/>
</dbReference>
<dbReference type="HAMAP" id="MF_00249">
    <property type="entry name" value="HslU"/>
    <property type="match status" value="1"/>
</dbReference>
<dbReference type="InterPro" id="IPR003593">
    <property type="entry name" value="AAA+_ATPase"/>
</dbReference>
<dbReference type="InterPro" id="IPR050052">
    <property type="entry name" value="ATP-dep_Clp_protease_ClpX"/>
</dbReference>
<dbReference type="InterPro" id="IPR003959">
    <property type="entry name" value="ATPase_AAA_core"/>
</dbReference>
<dbReference type="InterPro" id="IPR019489">
    <property type="entry name" value="Clp_ATPase_C"/>
</dbReference>
<dbReference type="InterPro" id="IPR004491">
    <property type="entry name" value="HslU"/>
</dbReference>
<dbReference type="InterPro" id="IPR027417">
    <property type="entry name" value="P-loop_NTPase"/>
</dbReference>
<dbReference type="NCBIfam" id="TIGR00390">
    <property type="entry name" value="hslU"/>
    <property type="match status" value="1"/>
</dbReference>
<dbReference type="NCBIfam" id="NF003544">
    <property type="entry name" value="PRK05201.1"/>
    <property type="match status" value="1"/>
</dbReference>
<dbReference type="PANTHER" id="PTHR48102">
    <property type="entry name" value="ATP-DEPENDENT CLP PROTEASE ATP-BINDING SUBUNIT CLPX-LIKE, MITOCHONDRIAL-RELATED"/>
    <property type="match status" value="1"/>
</dbReference>
<dbReference type="PANTHER" id="PTHR48102:SF3">
    <property type="entry name" value="ATP-DEPENDENT PROTEASE ATPASE SUBUNIT HSLU"/>
    <property type="match status" value="1"/>
</dbReference>
<dbReference type="Pfam" id="PF00004">
    <property type="entry name" value="AAA"/>
    <property type="match status" value="1"/>
</dbReference>
<dbReference type="Pfam" id="PF07724">
    <property type="entry name" value="AAA_2"/>
    <property type="match status" value="1"/>
</dbReference>
<dbReference type="SMART" id="SM00382">
    <property type="entry name" value="AAA"/>
    <property type="match status" value="1"/>
</dbReference>
<dbReference type="SMART" id="SM01086">
    <property type="entry name" value="ClpB_D2-small"/>
    <property type="match status" value="1"/>
</dbReference>
<dbReference type="SUPFAM" id="SSF52540">
    <property type="entry name" value="P-loop containing nucleoside triphosphate hydrolases"/>
    <property type="match status" value="1"/>
</dbReference>
<feature type="chain" id="PRO_0000160482" description="ATP-dependent protease ATPase subunit HslU">
    <location>
        <begin position="1"/>
        <end position="444"/>
    </location>
</feature>
<feature type="region of interest" description="Disordered" evidence="2">
    <location>
        <begin position="130"/>
        <end position="158"/>
    </location>
</feature>
<feature type="binding site" evidence="1">
    <location>
        <position position="20"/>
    </location>
    <ligand>
        <name>ATP</name>
        <dbReference type="ChEBI" id="CHEBI:30616"/>
    </ligand>
</feature>
<feature type="binding site" evidence="1">
    <location>
        <begin position="62"/>
        <end position="67"/>
    </location>
    <ligand>
        <name>ATP</name>
        <dbReference type="ChEBI" id="CHEBI:30616"/>
    </ligand>
</feature>
<feature type="binding site" evidence="1">
    <location>
        <position position="257"/>
    </location>
    <ligand>
        <name>ATP</name>
        <dbReference type="ChEBI" id="CHEBI:30616"/>
    </ligand>
</feature>
<feature type="binding site" evidence="1">
    <location>
        <position position="322"/>
    </location>
    <ligand>
        <name>ATP</name>
        <dbReference type="ChEBI" id="CHEBI:30616"/>
    </ligand>
</feature>
<feature type="binding site" evidence="1">
    <location>
        <position position="394"/>
    </location>
    <ligand>
        <name>ATP</name>
        <dbReference type="ChEBI" id="CHEBI:30616"/>
    </ligand>
</feature>
<name>HSLU_BORPE</name>
<comment type="function">
    <text evidence="1">ATPase subunit of a proteasome-like degradation complex; this subunit has chaperone activity. The binding of ATP and its subsequent hydrolysis by HslU are essential for unfolding of protein substrates subsequently hydrolyzed by HslV. HslU recognizes the N-terminal part of its protein substrates and unfolds these before they are guided to HslV for hydrolysis.</text>
</comment>
<comment type="subunit">
    <text evidence="1">A double ring-shaped homohexamer of HslV is capped on each side by a ring-shaped HslU homohexamer. The assembly of the HslU/HslV complex is dependent on binding of ATP.</text>
</comment>
<comment type="subcellular location">
    <subcellularLocation>
        <location evidence="1">Cytoplasm</location>
    </subcellularLocation>
</comment>
<comment type="similarity">
    <text evidence="1">Belongs to the ClpX chaperone family. HslU subfamily.</text>
</comment>